<keyword id="KW-0010">Activator</keyword>
<keyword id="KW-0013">ADP-ribosylation</keyword>
<keyword id="KW-0090">Biological rhythms</keyword>
<keyword id="KW-0131">Cell cycle</keyword>
<keyword id="KW-0963">Cytoplasm</keyword>
<keyword id="KW-0238">DNA-binding</keyword>
<keyword id="KW-0539">Nucleus</keyword>
<keyword id="KW-0675">Receptor</keyword>
<keyword id="KW-1185">Reference proteome</keyword>
<keyword id="KW-0677">Repeat</keyword>
<keyword id="KW-0678">Repressor</keyword>
<keyword id="KW-0804">Transcription</keyword>
<keyword id="KW-0805">Transcription regulation</keyword>
<name>AHR_DELLE</name>
<proteinExistence type="evidence at transcript level"/>
<evidence type="ECO:0000250" key="1">
    <source>
        <dbReference type="UniProtKB" id="P30561"/>
    </source>
</evidence>
<evidence type="ECO:0000250" key="2">
    <source>
        <dbReference type="UniProtKB" id="P35869"/>
    </source>
</evidence>
<evidence type="ECO:0000255" key="3">
    <source>
        <dbReference type="PROSITE-ProRule" id="PRU00140"/>
    </source>
</evidence>
<evidence type="ECO:0000255" key="4">
    <source>
        <dbReference type="PROSITE-ProRule" id="PRU00981"/>
    </source>
</evidence>
<evidence type="ECO:0000256" key="5">
    <source>
        <dbReference type="SAM" id="MobiDB-lite"/>
    </source>
</evidence>
<accession>Q95LD9</accession>
<feature type="propeptide" id="PRO_0000045166" evidence="1">
    <location>
        <begin position="1"/>
        <end position="10"/>
    </location>
</feature>
<feature type="chain" id="PRO_0000045167" description="Aryl hydrocarbon receptor">
    <location>
        <begin position="11"/>
        <end position="845"/>
    </location>
</feature>
<feature type="domain" description="bHLH" evidence="4">
    <location>
        <begin position="27"/>
        <end position="80"/>
    </location>
</feature>
<feature type="domain" description="PAS 1" evidence="3">
    <location>
        <begin position="110"/>
        <end position="180"/>
    </location>
</feature>
<feature type="domain" description="PAS 2" evidence="3">
    <location>
        <begin position="274"/>
        <end position="341"/>
    </location>
</feature>
<feature type="domain" description="PAC">
    <location>
        <begin position="347"/>
        <end position="385"/>
    </location>
</feature>
<feature type="region of interest" description="Disordered" evidence="5">
    <location>
        <begin position="1"/>
        <end position="39"/>
    </location>
</feature>
<feature type="region of interest" description="Required for maintaining the overall integrity of the AHR:ARNT heterodimer and its transcriptional activity" evidence="2">
    <location>
        <begin position="50"/>
        <end position="82"/>
    </location>
</feature>
<feature type="region of interest" description="Required for maintaining the overall integrity of the AHR:ARNT heterodimer and its transcriptional activity" evidence="2">
    <location>
        <begin position="117"/>
        <end position="125"/>
    </location>
</feature>
<feature type="region of interest" description="Required for maintaining the overall integrity of the AHR:ARNT heterodimer and its transcriptional activity" evidence="1">
    <location>
        <begin position="265"/>
        <end position="267"/>
    </location>
</feature>
<feature type="region of interest" description="Disordered" evidence="5">
    <location>
        <begin position="820"/>
        <end position="845"/>
    </location>
</feature>
<feature type="short sequence motif" description="Nuclear localization signal 1" evidence="2">
    <location>
        <begin position="13"/>
        <end position="16"/>
    </location>
</feature>
<feature type="short sequence motif" description="Nuclear localization signal 2" evidence="2">
    <location>
        <begin position="37"/>
        <end position="42"/>
    </location>
</feature>
<feature type="short sequence motif" description="Nuclear export signal" evidence="2">
    <location>
        <begin position="64"/>
        <end position="72"/>
    </location>
</feature>
<feature type="compositionally biased region" description="Polar residues" evidence="5">
    <location>
        <begin position="1"/>
        <end position="10"/>
    </location>
</feature>
<gene>
    <name type="primary">AHR</name>
</gene>
<reference key="1">
    <citation type="journal article" date="2001" name="Toxicol. Sci.">
        <title>cDNA cloning and characterization of a high affinity aryl hydrocarbon receptor in a cetacean, the beluga, Delphinapterus leucas.</title>
        <authorList>
            <person name="Jensen B.A."/>
            <person name="Hahn M.E."/>
        </authorList>
    </citation>
    <scope>NUCLEOTIDE SEQUENCE [MRNA]</scope>
    <source>
        <tissue>Liver</tissue>
    </source>
</reference>
<organism>
    <name type="scientific">Delphinapterus leucas</name>
    <name type="common">Beluga whale</name>
    <dbReference type="NCBI Taxonomy" id="9749"/>
    <lineage>
        <taxon>Eukaryota</taxon>
        <taxon>Metazoa</taxon>
        <taxon>Chordata</taxon>
        <taxon>Craniata</taxon>
        <taxon>Vertebrata</taxon>
        <taxon>Euteleostomi</taxon>
        <taxon>Mammalia</taxon>
        <taxon>Eutheria</taxon>
        <taxon>Laurasiatheria</taxon>
        <taxon>Artiodactyla</taxon>
        <taxon>Whippomorpha</taxon>
        <taxon>Cetacea</taxon>
        <taxon>Odontoceti</taxon>
        <taxon>Monodontidae</taxon>
        <taxon>Delphinapterus</taxon>
    </lineage>
</organism>
<protein>
    <recommendedName>
        <fullName>Aryl hydrocarbon receptor</fullName>
        <shortName>Ah receptor</shortName>
        <shortName>AhR</shortName>
    </recommendedName>
</protein>
<sequence>MNSSSASITYASRKRRKPVQKTVKPVPAEGIKSNPSKRHRDRLNTELDRLASLLPFPQDVVNKLDKLSVLRLSVSYLRAKSFFDVALKSTPADRNGVQDNCRTKFREGLNLQEGEFLLQALNGFVLVVTTDALVFYASSTIQDYLGFQQSDVIHQSVYELIHTEDRAEFQRQLHWALNPSQCPDSGQKMDEANGLSQPAVYYNPDQVPPENSSSMERCFVCRLRCLLDNSSGFLAMNFQGRLKYLHGQNKKGKDGSILPPQLALFAIATPLQPPSILEIRTKNFIFRTKHKLDFTPTGCDAKGRIVLGYTEAELCMRGSGYQFIHAADMLYCAEYHIRMIKTGESGLIVFRLLTKDNRWTWVQSNARLVYKNGRPDYIIATQRPLTDEEGTEHLRKRNLKLPFMFTTGEAVLYEVTNPFPPIMDPLPIRTKNGAGGKDSATKSTLSKDFLNPSSLLNAMMQQDESIYLYPASSSTPFERNFFSDSQNECSNWQNNVAPMGSDDILKHEQIGQSQEMNPTLSGDHAGLFPDNRNSDLYSIMKHLGIDFEDIKHMQQNEEFFRTDFSGEDDFRDIDLTDEILTYVEDSLNKSALGCSGYHPQQSMALNPSCMVQEHLQLEQQEQRQQHQKHRAVEQQQLCQKMQHMQVNGMFANWSSNQSGPFNCPQPDLQQYDVFSDVPGTSQEFPYKSEIDTMPYAQNFIPCSQSVLPPHSKGTQLDFPIGDFEPAPYPTTSSNLEDFVTCLQVPQSQRHGLNPQSAIVTPQTCYTGAVSMYQCQPEAQHSHVAQMQYNPTVPGPQAFLNKFQNGGVLNETYPAELNSINNTQPTTHLHPSEARPFSDLTSSGFL</sequence>
<dbReference type="EMBL" id="AF332999">
    <property type="protein sequence ID" value="AAL04031.1"/>
    <property type="molecule type" value="mRNA"/>
</dbReference>
<dbReference type="RefSeq" id="XP_022443278.1">
    <property type="nucleotide sequence ID" value="XM_022587570.1"/>
</dbReference>
<dbReference type="SMR" id="Q95LD9"/>
<dbReference type="FunCoup" id="Q95LD9">
    <property type="interactions" value="131"/>
</dbReference>
<dbReference type="STRING" id="9749.Q95LD9"/>
<dbReference type="GeneID" id="111181799"/>
<dbReference type="InParanoid" id="Q95LD9"/>
<dbReference type="OrthoDB" id="7788762at2759"/>
<dbReference type="Proteomes" id="UP000248483">
    <property type="component" value="Unplaced"/>
</dbReference>
<dbReference type="GO" id="GO:0005737">
    <property type="term" value="C:cytoplasm"/>
    <property type="evidence" value="ECO:0000250"/>
    <property type="project" value="UniProtKB"/>
</dbReference>
<dbReference type="GO" id="GO:0005829">
    <property type="term" value="C:cytosol"/>
    <property type="evidence" value="ECO:0007669"/>
    <property type="project" value="Ensembl"/>
</dbReference>
<dbReference type="GO" id="GO:0034753">
    <property type="term" value="C:nuclear aryl hydrocarbon receptor complex"/>
    <property type="evidence" value="ECO:0000250"/>
    <property type="project" value="UniProtKB"/>
</dbReference>
<dbReference type="GO" id="GO:0005634">
    <property type="term" value="C:nucleus"/>
    <property type="evidence" value="ECO:0000250"/>
    <property type="project" value="UniProtKB"/>
</dbReference>
<dbReference type="GO" id="GO:0070888">
    <property type="term" value="F:E-box binding"/>
    <property type="evidence" value="ECO:0000250"/>
    <property type="project" value="UniProtKB"/>
</dbReference>
<dbReference type="GO" id="GO:0051879">
    <property type="term" value="F:Hsp90 protein binding"/>
    <property type="evidence" value="ECO:0007669"/>
    <property type="project" value="Ensembl"/>
</dbReference>
<dbReference type="GO" id="GO:0004879">
    <property type="term" value="F:nuclear receptor activity"/>
    <property type="evidence" value="ECO:0007669"/>
    <property type="project" value="Ensembl"/>
</dbReference>
<dbReference type="GO" id="GO:0046982">
    <property type="term" value="F:protein heterodimerization activity"/>
    <property type="evidence" value="ECO:0000250"/>
    <property type="project" value="UniProtKB"/>
</dbReference>
<dbReference type="GO" id="GO:0061629">
    <property type="term" value="F:RNA polymerase II-specific DNA-binding transcription factor binding"/>
    <property type="evidence" value="ECO:0007669"/>
    <property type="project" value="Ensembl"/>
</dbReference>
<dbReference type="GO" id="GO:1990837">
    <property type="term" value="F:sequence-specific double-stranded DNA binding"/>
    <property type="evidence" value="ECO:0000250"/>
    <property type="project" value="UniProtKB"/>
</dbReference>
<dbReference type="GO" id="GO:0017025">
    <property type="term" value="F:TBP-class protein binding"/>
    <property type="evidence" value="ECO:0007669"/>
    <property type="project" value="Ensembl"/>
</dbReference>
<dbReference type="GO" id="GO:0001094">
    <property type="term" value="F:TFIID-class transcription factor complex binding"/>
    <property type="evidence" value="ECO:0007669"/>
    <property type="project" value="Ensembl"/>
</dbReference>
<dbReference type="GO" id="GO:0001223">
    <property type="term" value="F:transcription coactivator binding"/>
    <property type="evidence" value="ECO:0007669"/>
    <property type="project" value="Ensembl"/>
</dbReference>
<dbReference type="GO" id="GO:1904613">
    <property type="term" value="P:cellular response to 2,3,7,8-tetrachlorodibenzodioxine"/>
    <property type="evidence" value="ECO:0007669"/>
    <property type="project" value="Ensembl"/>
</dbReference>
<dbReference type="GO" id="GO:0071320">
    <property type="term" value="P:cellular response to cAMP"/>
    <property type="evidence" value="ECO:0007669"/>
    <property type="project" value="Ensembl"/>
</dbReference>
<dbReference type="GO" id="GO:1904322">
    <property type="term" value="P:cellular response to forskolin"/>
    <property type="evidence" value="ECO:0007669"/>
    <property type="project" value="Ensembl"/>
</dbReference>
<dbReference type="GO" id="GO:0071219">
    <property type="term" value="P:cellular response to molecule of bacterial origin"/>
    <property type="evidence" value="ECO:0007669"/>
    <property type="project" value="Ensembl"/>
</dbReference>
<dbReference type="GO" id="GO:0032922">
    <property type="term" value="P:circadian regulation of gene expression"/>
    <property type="evidence" value="ECO:0000250"/>
    <property type="project" value="UniProtKB"/>
</dbReference>
<dbReference type="GO" id="GO:0045892">
    <property type="term" value="P:negative regulation of DNA-templated transcription"/>
    <property type="evidence" value="ECO:0000250"/>
    <property type="project" value="UniProtKB"/>
</dbReference>
<dbReference type="GO" id="GO:0050728">
    <property type="term" value="P:negative regulation of inflammatory response"/>
    <property type="evidence" value="ECO:0007669"/>
    <property type="project" value="Ensembl"/>
</dbReference>
<dbReference type="GO" id="GO:0002841">
    <property type="term" value="P:negative regulation of T cell mediated immune response to tumor cell"/>
    <property type="evidence" value="ECO:0000250"/>
    <property type="project" value="UniProtKB"/>
</dbReference>
<dbReference type="GO" id="GO:0045893">
    <property type="term" value="P:positive regulation of DNA-templated transcription"/>
    <property type="evidence" value="ECO:0000250"/>
    <property type="project" value="UniProtKB"/>
</dbReference>
<dbReference type="GO" id="GO:0045944">
    <property type="term" value="P:positive regulation of transcription by RNA polymerase II"/>
    <property type="evidence" value="ECO:0000250"/>
    <property type="project" value="UniProtKB"/>
</dbReference>
<dbReference type="GO" id="GO:0002819">
    <property type="term" value="P:regulation of adaptive immune response"/>
    <property type="evidence" value="ECO:0000250"/>
    <property type="project" value="UniProtKB"/>
</dbReference>
<dbReference type="GO" id="GO:0030888">
    <property type="term" value="P:regulation of B cell proliferation"/>
    <property type="evidence" value="ECO:0007669"/>
    <property type="project" value="Ensembl"/>
</dbReference>
<dbReference type="GO" id="GO:0009636">
    <property type="term" value="P:response to toxic substance"/>
    <property type="evidence" value="ECO:0007669"/>
    <property type="project" value="Ensembl"/>
</dbReference>
<dbReference type="GO" id="GO:0009410">
    <property type="term" value="P:response to xenobiotic stimulus"/>
    <property type="evidence" value="ECO:0000250"/>
    <property type="project" value="UniProtKB"/>
</dbReference>
<dbReference type="GO" id="GO:0006805">
    <property type="term" value="P:xenobiotic metabolic process"/>
    <property type="evidence" value="ECO:0007669"/>
    <property type="project" value="InterPro"/>
</dbReference>
<dbReference type="CDD" id="cd11436">
    <property type="entry name" value="bHLH-PAS_AhR"/>
    <property type="match status" value="1"/>
</dbReference>
<dbReference type="CDD" id="cd00130">
    <property type="entry name" value="PAS"/>
    <property type="match status" value="2"/>
</dbReference>
<dbReference type="FunFam" id="3.30.450.20:FF:000035">
    <property type="entry name" value="Aryl hydrocarbon receptor"/>
    <property type="match status" value="1"/>
</dbReference>
<dbReference type="FunFam" id="3.30.450.20:FF:000019">
    <property type="entry name" value="Aryl hydrocarbon receptor 1"/>
    <property type="match status" value="1"/>
</dbReference>
<dbReference type="FunFam" id="4.10.280.10:FF:000024">
    <property type="entry name" value="Aryl hydrocarbon receptor 2"/>
    <property type="match status" value="1"/>
</dbReference>
<dbReference type="Gene3D" id="4.10.280.10">
    <property type="entry name" value="Helix-loop-helix DNA-binding domain"/>
    <property type="match status" value="1"/>
</dbReference>
<dbReference type="Gene3D" id="3.30.450.20">
    <property type="entry name" value="PAS domain"/>
    <property type="match status" value="2"/>
</dbReference>
<dbReference type="InterPro" id="IPR039091">
    <property type="entry name" value="AHR/AHRR"/>
</dbReference>
<dbReference type="InterPro" id="IPR033348">
    <property type="entry name" value="AHR_bHLH"/>
</dbReference>
<dbReference type="InterPro" id="IPR011598">
    <property type="entry name" value="bHLH_dom"/>
</dbReference>
<dbReference type="InterPro" id="IPR036638">
    <property type="entry name" value="HLH_DNA-bd_sf"/>
</dbReference>
<dbReference type="InterPro" id="IPR001610">
    <property type="entry name" value="PAC"/>
</dbReference>
<dbReference type="InterPro" id="IPR000014">
    <property type="entry name" value="PAS"/>
</dbReference>
<dbReference type="InterPro" id="IPR035965">
    <property type="entry name" value="PAS-like_dom_sf"/>
</dbReference>
<dbReference type="InterPro" id="IPR013767">
    <property type="entry name" value="PAS_fold"/>
</dbReference>
<dbReference type="InterPro" id="IPR013655">
    <property type="entry name" value="PAS_fold_3"/>
</dbReference>
<dbReference type="PANTHER" id="PTHR10649">
    <property type="entry name" value="ARYL HYDROCARBON RECEPTOR"/>
    <property type="match status" value="1"/>
</dbReference>
<dbReference type="PANTHER" id="PTHR10649:SF9">
    <property type="entry name" value="ARYL HYDROCARBON RECEPTOR"/>
    <property type="match status" value="1"/>
</dbReference>
<dbReference type="Pfam" id="PF00010">
    <property type="entry name" value="HLH"/>
    <property type="match status" value="1"/>
</dbReference>
<dbReference type="Pfam" id="PF00989">
    <property type="entry name" value="PAS"/>
    <property type="match status" value="1"/>
</dbReference>
<dbReference type="Pfam" id="PF08447">
    <property type="entry name" value="PAS_3"/>
    <property type="match status" value="1"/>
</dbReference>
<dbReference type="SMART" id="SM00353">
    <property type="entry name" value="HLH"/>
    <property type="match status" value="1"/>
</dbReference>
<dbReference type="SMART" id="SM00086">
    <property type="entry name" value="PAC"/>
    <property type="match status" value="1"/>
</dbReference>
<dbReference type="SMART" id="SM00091">
    <property type="entry name" value="PAS"/>
    <property type="match status" value="2"/>
</dbReference>
<dbReference type="SUPFAM" id="SSF47459">
    <property type="entry name" value="HLH, helix-loop-helix DNA-binding domain"/>
    <property type="match status" value="1"/>
</dbReference>
<dbReference type="SUPFAM" id="SSF55785">
    <property type="entry name" value="PYP-like sensor domain (PAS domain)"/>
    <property type="match status" value="2"/>
</dbReference>
<dbReference type="PROSITE" id="PS50888">
    <property type="entry name" value="BHLH"/>
    <property type="match status" value="1"/>
</dbReference>
<dbReference type="PROSITE" id="PS50112">
    <property type="entry name" value="PAS"/>
    <property type="match status" value="1"/>
</dbReference>
<comment type="function">
    <text evidence="2">Ligand-activated transcription factor that enables cells to adapt to changing conditions by sensing compounds from the environment, diet, microbiome and cellular metabolism, and which plays important roles in development, immunity and cancer. Upon ligand binding, translocates into the nucleus, where it heterodimerizes with ARNT and induces transcription by binding to xenobiotic response elements (XRE). Regulates a variety of biological processes, including angiogenesis, hematopoiesis, drug and lipid metabolism, cell motility and immune modulation. Xenobiotics can act as ligands: upon xenobiotic-binding, activates the expression of multiple phase I and II xenobiotic chemical metabolizing enzyme genes (such as the CYP1A1 gene). Mediates biochemical and toxic effects of halogenated aromatic hydrocarbons. Next to xenobiotics, natural ligands derived from plants, microbiota, and endogenous metabolism are potent AHR agonists. Tryptophan (Trp) derivatives constitute an important class of endogenous AHR ligands. Acts as a negative regulator of anti-tumor immunity: indoles and kynurenic acid generated by Trp catabolism act as ligand and activate AHR, thereby promoting AHR-driven cancer cell motility and suppressing adaptive immunity. Regulates the circadian clock by inhibiting the basal and circadian expression of the core circadian component PER1. Inhibits PER1 by repressing the CLOCK-BMAL1 heterodimer mediated transcriptional activation of PER1. The heterodimer ARNT:AHR binds to core DNA sequence 5'-TGCGTG-3' within the dioxin response element (DRE) of target gene promoters and activates their transcription.</text>
</comment>
<comment type="subunit">
    <text evidence="1 2">Homodimer (By similarity). Heterodimer; efficient DNA binding requires dimerization with another bHLH protein. Interacts with ARNT; the heterodimer ARNT:AHR binds to core DNA sequence 5'-TGCGTG-3' within the dioxin response element (DRE) of target gene promoters and activates their transcription (By similarity). Binds MYBBP1A (By similarity). Interacts with coactivators including SRC-1, RIP140 and NOCA7, and with the corepressor SMRT. Interacts with NEDD8 and IVNS1ABP (By similarity). Interacts with BMAL1. Interacts with HSP90AB1 (By similarity). Interacts with TIPARP; leading to mono-ADP-ribosylation of AHR and subsequent inhibition of AHR (By similarity).</text>
</comment>
<comment type="subcellular location">
    <subcellularLocation>
        <location evidence="1">Cytoplasm</location>
    </subcellularLocation>
    <subcellularLocation>
        <location evidence="1">Nucleus</location>
    </subcellularLocation>
    <text evidence="1">Initially cytoplasmic; upon binding with ligand and interaction with a HSP90, it translocates to the nucleus.</text>
</comment>
<comment type="PTM">
    <text evidence="2">Mono-ADP-ribosylated, leading to inhibit transcription activator activity of AHR.</text>
</comment>